<keyword id="KW-0539">Nucleus</keyword>
<keyword id="KW-1185">Reference proteome</keyword>
<keyword id="KW-0694">RNA-binding</keyword>
<keyword id="KW-0819">tRNA processing</keyword>
<name>TRM6_CRYNJ</name>
<reference key="1">
    <citation type="journal article" date="2005" name="Science">
        <title>The genome of the basidiomycetous yeast and human pathogen Cryptococcus neoformans.</title>
        <authorList>
            <person name="Loftus B.J."/>
            <person name="Fung E."/>
            <person name="Roncaglia P."/>
            <person name="Rowley D."/>
            <person name="Amedeo P."/>
            <person name="Bruno D."/>
            <person name="Vamathevan J."/>
            <person name="Miranda M."/>
            <person name="Anderson I.J."/>
            <person name="Fraser J.A."/>
            <person name="Allen J.E."/>
            <person name="Bosdet I.E."/>
            <person name="Brent M.R."/>
            <person name="Chiu R."/>
            <person name="Doering T.L."/>
            <person name="Donlin M.J."/>
            <person name="D'Souza C.A."/>
            <person name="Fox D.S."/>
            <person name="Grinberg V."/>
            <person name="Fu J."/>
            <person name="Fukushima M."/>
            <person name="Haas B.J."/>
            <person name="Huang J.C."/>
            <person name="Janbon G."/>
            <person name="Jones S.J.M."/>
            <person name="Koo H.L."/>
            <person name="Krzywinski M.I."/>
            <person name="Kwon-Chung K.J."/>
            <person name="Lengeler K.B."/>
            <person name="Maiti R."/>
            <person name="Marra M.A."/>
            <person name="Marra R.E."/>
            <person name="Mathewson C.A."/>
            <person name="Mitchell T.G."/>
            <person name="Pertea M."/>
            <person name="Riggs F.R."/>
            <person name="Salzberg S.L."/>
            <person name="Schein J.E."/>
            <person name="Shvartsbeyn A."/>
            <person name="Shin H."/>
            <person name="Shumway M."/>
            <person name="Specht C.A."/>
            <person name="Suh B.B."/>
            <person name="Tenney A."/>
            <person name="Utterback T.R."/>
            <person name="Wickes B.L."/>
            <person name="Wortman J.R."/>
            <person name="Wye N.H."/>
            <person name="Kronstad J.W."/>
            <person name="Lodge J.K."/>
            <person name="Heitman J."/>
            <person name="Davis R.W."/>
            <person name="Fraser C.M."/>
            <person name="Hyman R.W."/>
        </authorList>
    </citation>
    <scope>NUCLEOTIDE SEQUENCE [LARGE SCALE GENOMIC DNA]</scope>
    <source>
        <strain>JEC21 / ATCC MYA-565</strain>
    </source>
</reference>
<feature type="chain" id="PRO_0000256162" description="tRNA (adenine(58)-N(1))-methyltransferase non-catalytic subunit TRM6">
    <location>
        <begin position="1"/>
        <end position="560"/>
    </location>
</feature>
<feature type="region of interest" description="Disordered" evidence="2">
    <location>
        <begin position="1"/>
        <end position="61"/>
    </location>
</feature>
<feature type="region of interest" description="Disordered" evidence="2">
    <location>
        <begin position="128"/>
        <end position="171"/>
    </location>
</feature>
<feature type="region of interest" description="Disordered" evidence="2">
    <location>
        <begin position="510"/>
        <end position="560"/>
    </location>
</feature>
<feature type="compositionally biased region" description="Polar residues" evidence="2">
    <location>
        <begin position="1"/>
        <end position="20"/>
    </location>
</feature>
<feature type="compositionally biased region" description="Polar residues" evidence="2">
    <location>
        <begin position="128"/>
        <end position="147"/>
    </location>
</feature>
<feature type="compositionally biased region" description="Acidic residues" evidence="2">
    <location>
        <begin position="548"/>
        <end position="560"/>
    </location>
</feature>
<gene>
    <name type="primary">TRM6</name>
    <name type="ordered locus">CNC01870</name>
</gene>
<comment type="function">
    <text evidence="1">Substrate-binding subunit of tRNA (adenine-N(1)-)-methyltransferase, which catalyzes the formation of N(1)-methyladenine at position 58 (m1A58) in initiator methionyl-tRNA.</text>
</comment>
<comment type="subunit">
    <text evidence="1">Heterotetramer; composed of two copies of TRM6 and two copies of TRM61.</text>
</comment>
<comment type="subcellular location">
    <subcellularLocation>
        <location evidence="1">Nucleus</location>
    </subcellularLocation>
</comment>
<comment type="similarity">
    <text evidence="3">Belongs to the TRM6/GCD10 family.</text>
</comment>
<evidence type="ECO:0000250" key="1">
    <source>
        <dbReference type="UniProtKB" id="P41814"/>
    </source>
</evidence>
<evidence type="ECO:0000256" key="2">
    <source>
        <dbReference type="SAM" id="MobiDB-lite"/>
    </source>
</evidence>
<evidence type="ECO:0000305" key="3"/>
<sequence>MTEKQQNSQQPSQLDSTASISALPPQLQQPAAGITGAPGNAEATTSEPPSTKRPRKAIESSEPLTEVILRRLTTIKEGDTVLLRLPSDLVKSVVVQGDNLVQLGKYGAFPASQLIGLHYDITYEIVSSSGSGASTPQPQSLDFSTEETQSKKGNKKNKNKGKDTAAVSKNNPGWNNILRPLKRQLVVDAVIDDIVETNEFIEDLSETEKTTLSHDEIAELRAQGCTPEEIIQAQIARHEKFGLKTDFSKEKWRRRKEKKFYQTVQPLAPSIPNVLYHYNLRSPQSILHLRDDTLSQLLTMANVRPGGRYLVVDDTGGLITAAVLERMGSEGSILLFNESDSPPAWGILQTMNFSDRELEPIKWLNWLEAEEEYQKPAPPVQAEPPTNPIKAAAKQRKYAAQVAELNNTRNELHLGGWDGLILATTLNPISVVARLTPYLLGSAPIVVYSPYYQVLAELLSWSKKDPNYLNDTLTESWERTYQVLPGRTHPMMTTSATGGYLWNATRVHPSQFQPESHQRFKRRKTGKAPGKEQLSSVAKDEEAVNESLEIDPEELANEGE</sequence>
<proteinExistence type="inferred from homology"/>
<dbReference type="EMBL" id="AE017343">
    <property type="protein sequence ID" value="AAW42248.1"/>
    <property type="molecule type" value="Genomic_DNA"/>
</dbReference>
<dbReference type="RefSeq" id="XP_569555.1">
    <property type="nucleotide sequence ID" value="XM_569555.1"/>
</dbReference>
<dbReference type="SMR" id="P0CS06"/>
<dbReference type="FunCoup" id="P0CS06">
    <property type="interactions" value="484"/>
</dbReference>
<dbReference type="STRING" id="214684.P0CS06"/>
<dbReference type="PaxDb" id="214684-P0CS06"/>
<dbReference type="EnsemblFungi" id="AAW42248">
    <property type="protein sequence ID" value="AAW42248"/>
    <property type="gene ID" value="CNC01870"/>
</dbReference>
<dbReference type="GeneID" id="3256767"/>
<dbReference type="KEGG" id="cne:CNC01870"/>
<dbReference type="VEuPathDB" id="FungiDB:CNC01870"/>
<dbReference type="eggNOG" id="KOG1416">
    <property type="taxonomic scope" value="Eukaryota"/>
</dbReference>
<dbReference type="HOGENOM" id="CLU_010916_1_0_1"/>
<dbReference type="InParanoid" id="P0CS06"/>
<dbReference type="OMA" id="TRCRPYQ"/>
<dbReference type="OrthoDB" id="10254665at2759"/>
<dbReference type="Proteomes" id="UP000002149">
    <property type="component" value="Chromosome 3"/>
</dbReference>
<dbReference type="GO" id="GO:0005634">
    <property type="term" value="C:nucleus"/>
    <property type="evidence" value="ECO:0000318"/>
    <property type="project" value="GO_Central"/>
</dbReference>
<dbReference type="GO" id="GO:0031515">
    <property type="term" value="C:tRNA (m1A) methyltransferase complex"/>
    <property type="evidence" value="ECO:0000318"/>
    <property type="project" value="GO_Central"/>
</dbReference>
<dbReference type="GO" id="GO:0003723">
    <property type="term" value="F:RNA binding"/>
    <property type="evidence" value="ECO:0007669"/>
    <property type="project" value="UniProtKB-KW"/>
</dbReference>
<dbReference type="GO" id="GO:0030488">
    <property type="term" value="P:tRNA methylation"/>
    <property type="evidence" value="ECO:0007669"/>
    <property type="project" value="InterPro"/>
</dbReference>
<dbReference type="Gene3D" id="3.10.330.20">
    <property type="match status" value="1"/>
</dbReference>
<dbReference type="InterPro" id="IPR017423">
    <property type="entry name" value="TRM6"/>
</dbReference>
<dbReference type="PANTHER" id="PTHR12945">
    <property type="entry name" value="TRANSLATION INITIATION FACTOR EIF3-RELATED"/>
    <property type="match status" value="1"/>
</dbReference>
<dbReference type="PANTHER" id="PTHR12945:SF0">
    <property type="entry name" value="TRNA (ADENINE(58)-N(1))-METHYLTRANSFERASE NON-CATALYTIC SUBUNIT TRM6"/>
    <property type="match status" value="1"/>
</dbReference>
<dbReference type="Pfam" id="PF04189">
    <property type="entry name" value="Gcd10p"/>
    <property type="match status" value="1"/>
</dbReference>
<protein>
    <recommendedName>
        <fullName>tRNA (adenine(58)-N(1))-methyltransferase non-catalytic subunit TRM6</fullName>
    </recommendedName>
    <alternativeName>
        <fullName>tRNA(m1A58)-methyltransferase subunit TRM6</fullName>
        <shortName>tRNA(m1A58)MTase subunit TRM6</shortName>
    </alternativeName>
</protein>
<organism>
    <name type="scientific">Cryptococcus neoformans var. neoformans serotype D (strain JEC21 / ATCC MYA-565)</name>
    <name type="common">Filobasidiella neoformans</name>
    <dbReference type="NCBI Taxonomy" id="214684"/>
    <lineage>
        <taxon>Eukaryota</taxon>
        <taxon>Fungi</taxon>
        <taxon>Dikarya</taxon>
        <taxon>Basidiomycota</taxon>
        <taxon>Agaricomycotina</taxon>
        <taxon>Tremellomycetes</taxon>
        <taxon>Tremellales</taxon>
        <taxon>Cryptococcaceae</taxon>
        <taxon>Cryptococcus</taxon>
        <taxon>Cryptococcus neoformans species complex</taxon>
    </lineage>
</organism>
<accession>P0CS06</accession>
<accession>Q55VE7</accession>
<accession>Q5KKT9</accession>